<organism>
    <name type="scientific">Homo sapiens</name>
    <name type="common">Human</name>
    <dbReference type="NCBI Taxonomy" id="9606"/>
    <lineage>
        <taxon>Eukaryota</taxon>
        <taxon>Metazoa</taxon>
        <taxon>Chordata</taxon>
        <taxon>Craniata</taxon>
        <taxon>Vertebrata</taxon>
        <taxon>Euteleostomi</taxon>
        <taxon>Mammalia</taxon>
        <taxon>Eutheria</taxon>
        <taxon>Euarchontoglires</taxon>
        <taxon>Primates</taxon>
        <taxon>Haplorrhini</taxon>
        <taxon>Catarrhini</taxon>
        <taxon>Hominidae</taxon>
        <taxon>Homo</taxon>
    </lineage>
</organism>
<sequence length="224" mass="25592">MSRKIEGFLLLLLFGYEATLGLSSTEDEGEDPWYQKACKCDCQGGPNALWSAGATSLDCIPECPYHKPLGFESGEVTPDQITCSNPEQYVGWYSSWTANKARLNSQGFGCAWLSKFQDSSQWLQIDLKEIKVISGILTQGRCDIDEWMTKYSVQYRTDERLNWIYYKDQTGNNRVFYGNSDRTSTVQNLLRPPIISRFIRLIPLGWHVRIAIRMELLECVSKCA</sequence>
<gene>
    <name type="primary">RS1</name>
    <name type="synonym">XLRS1</name>
</gene>
<name>XLRS1_HUMAN</name>
<dbReference type="EMBL" id="AF018963">
    <property type="protein sequence ID" value="AAC18405.1"/>
    <property type="molecule type" value="Genomic_DNA"/>
</dbReference>
<dbReference type="EMBL" id="AF018958">
    <property type="protein sequence ID" value="AAC18405.1"/>
    <property type="status" value="JOINED"/>
    <property type="molecule type" value="Genomic_DNA"/>
</dbReference>
<dbReference type="EMBL" id="AF018959">
    <property type="protein sequence ID" value="AAC18405.1"/>
    <property type="status" value="JOINED"/>
    <property type="molecule type" value="Genomic_DNA"/>
</dbReference>
<dbReference type="EMBL" id="AF018960">
    <property type="protein sequence ID" value="AAC18405.1"/>
    <property type="status" value="JOINED"/>
    <property type="molecule type" value="Genomic_DNA"/>
</dbReference>
<dbReference type="EMBL" id="AF018961">
    <property type="protein sequence ID" value="AAC18405.1"/>
    <property type="status" value="JOINED"/>
    <property type="molecule type" value="Genomic_DNA"/>
</dbReference>
<dbReference type="EMBL" id="AF018962">
    <property type="protein sequence ID" value="AAC18405.1"/>
    <property type="status" value="JOINED"/>
    <property type="molecule type" value="Genomic_DNA"/>
</dbReference>
<dbReference type="EMBL" id="AF014459">
    <property type="protein sequence ID" value="AAC17928.1"/>
    <property type="molecule type" value="mRNA"/>
</dbReference>
<dbReference type="EMBL" id="Z92542">
    <property type="status" value="NOT_ANNOTATED_CDS"/>
    <property type="molecule type" value="Genomic_DNA"/>
</dbReference>
<dbReference type="EMBL" id="Z94056">
    <property type="status" value="NOT_ANNOTATED_CDS"/>
    <property type="molecule type" value="Genomic_DNA"/>
</dbReference>
<dbReference type="EMBL" id="DQ426892">
    <property type="protein sequence ID" value="ABD90543.1"/>
    <property type="molecule type" value="mRNA"/>
</dbReference>
<dbReference type="CCDS" id="CCDS14187.1"/>
<dbReference type="RefSeq" id="NP_000321.1">
    <property type="nucleotide sequence ID" value="NM_000330.4"/>
</dbReference>
<dbReference type="PDB" id="3JD6">
    <property type="method" value="EM"/>
    <property type="resolution" value="4.10 A"/>
    <property type="chains" value="O=24-224"/>
</dbReference>
<dbReference type="PDB" id="5N6W">
    <property type="method" value="EM"/>
    <property type="resolution" value="4.20 A"/>
    <property type="chains" value="A/B/C/D/E/F/G/H/I/J/K/L/M/N/O/P=24-224"/>
</dbReference>
<dbReference type="PDBsum" id="3JD6"/>
<dbReference type="PDBsum" id="5N6W"/>
<dbReference type="EMDB" id="EMD-3595"/>
<dbReference type="EMDB" id="EMD-6425"/>
<dbReference type="EMDB" id="EMD-7907"/>
<dbReference type="SMR" id="O15537"/>
<dbReference type="BioGRID" id="112161">
    <property type="interactions" value="2"/>
</dbReference>
<dbReference type="CORUM" id="O15537"/>
<dbReference type="FunCoup" id="O15537">
    <property type="interactions" value="14"/>
</dbReference>
<dbReference type="IntAct" id="O15537">
    <property type="interactions" value="4"/>
</dbReference>
<dbReference type="STRING" id="9606.ENSP00000369320"/>
<dbReference type="TCDB" id="8.A.154.1.1">
    <property type="family name" value="the retinoschisin (rs1) family"/>
</dbReference>
<dbReference type="iPTMnet" id="O15537"/>
<dbReference type="PhosphoSitePlus" id="O15537"/>
<dbReference type="BioMuta" id="RS1"/>
<dbReference type="MassIVE" id="O15537"/>
<dbReference type="PaxDb" id="9606-ENSP00000369320"/>
<dbReference type="PeptideAtlas" id="O15537"/>
<dbReference type="ProteomicsDB" id="48745"/>
<dbReference type="Antibodypedia" id="24146">
    <property type="antibodies" value="77 antibodies from 12 providers"/>
</dbReference>
<dbReference type="DNASU" id="6247"/>
<dbReference type="Ensembl" id="ENST00000379984.4">
    <property type="protein sequence ID" value="ENSP00000369320.3"/>
    <property type="gene ID" value="ENSG00000102104.9"/>
</dbReference>
<dbReference type="GeneID" id="6247"/>
<dbReference type="KEGG" id="hsa:6247"/>
<dbReference type="MANE-Select" id="ENST00000379984.4">
    <property type="protein sequence ID" value="ENSP00000369320.3"/>
    <property type="RefSeq nucleotide sequence ID" value="NM_000330.4"/>
    <property type="RefSeq protein sequence ID" value="NP_000321.1"/>
</dbReference>
<dbReference type="UCSC" id="uc004cyo.4">
    <property type="organism name" value="human"/>
</dbReference>
<dbReference type="AGR" id="HGNC:10457"/>
<dbReference type="CTD" id="6247"/>
<dbReference type="DisGeNET" id="6247"/>
<dbReference type="GeneCards" id="RS1"/>
<dbReference type="GeneReviews" id="RS1"/>
<dbReference type="HGNC" id="HGNC:10457">
    <property type="gene designation" value="RS1"/>
</dbReference>
<dbReference type="HPA" id="ENSG00000102104">
    <property type="expression patterns" value="Tissue enriched (retina)"/>
</dbReference>
<dbReference type="MalaCards" id="RS1"/>
<dbReference type="MIM" id="300839">
    <property type="type" value="gene"/>
</dbReference>
<dbReference type="MIM" id="312700">
    <property type="type" value="phenotype"/>
</dbReference>
<dbReference type="neXtProt" id="NX_O15537"/>
<dbReference type="OpenTargets" id="ENSG00000102104"/>
<dbReference type="Orphanet" id="792">
    <property type="disease" value="X-linked retinoschisis"/>
</dbReference>
<dbReference type="PharmGKB" id="PA34871"/>
<dbReference type="VEuPathDB" id="HostDB:ENSG00000102104"/>
<dbReference type="eggNOG" id="ENOG502QU6Y">
    <property type="taxonomic scope" value="Eukaryota"/>
</dbReference>
<dbReference type="GeneTree" id="ENSGT00940000161181"/>
<dbReference type="HOGENOM" id="CLU_030066_2_0_1"/>
<dbReference type="InParanoid" id="O15537"/>
<dbReference type="OMA" id="VCKCDCQ"/>
<dbReference type="OrthoDB" id="9973968at2759"/>
<dbReference type="PAN-GO" id="O15537">
    <property type="GO annotations" value="0 GO annotations based on evolutionary models"/>
</dbReference>
<dbReference type="PhylomeDB" id="O15537"/>
<dbReference type="PathwayCommons" id="O15537"/>
<dbReference type="SignaLink" id="O15537"/>
<dbReference type="SIGNOR" id="O15537"/>
<dbReference type="BioGRID-ORCS" id="6247">
    <property type="hits" value="10 hits in 759 CRISPR screens"/>
</dbReference>
<dbReference type="ChiTaRS" id="RS1">
    <property type="organism name" value="human"/>
</dbReference>
<dbReference type="GeneWiki" id="Retinoschisin"/>
<dbReference type="GenomeRNAi" id="6247"/>
<dbReference type="Pharos" id="O15537">
    <property type="development level" value="Tbio"/>
</dbReference>
<dbReference type="PRO" id="PR:O15537"/>
<dbReference type="Proteomes" id="UP000005640">
    <property type="component" value="Chromosome X"/>
</dbReference>
<dbReference type="RNAct" id="O15537">
    <property type="molecule type" value="protein"/>
</dbReference>
<dbReference type="Bgee" id="ENSG00000102104">
    <property type="expression patterns" value="Expressed in male germ line stem cell (sensu Vertebrata) in testis and 17 other cell types or tissues"/>
</dbReference>
<dbReference type="GO" id="GO:0009897">
    <property type="term" value="C:external side of plasma membrane"/>
    <property type="evidence" value="ECO:0000316"/>
    <property type="project" value="ARUK-UCL"/>
</dbReference>
<dbReference type="GO" id="GO:0005615">
    <property type="term" value="C:extracellular space"/>
    <property type="evidence" value="ECO:0000314"/>
    <property type="project" value="UniProtKB"/>
</dbReference>
<dbReference type="GO" id="GO:0098984">
    <property type="term" value="C:neuron to neuron synapse"/>
    <property type="evidence" value="ECO:0000250"/>
    <property type="project" value="ARUK-UCL"/>
</dbReference>
<dbReference type="GO" id="GO:0001917">
    <property type="term" value="C:photoreceptor inner segment"/>
    <property type="evidence" value="ECO:0000250"/>
    <property type="project" value="ARUK-UCL"/>
</dbReference>
<dbReference type="GO" id="GO:0032991">
    <property type="term" value="C:protein-containing complex"/>
    <property type="evidence" value="ECO:0007669"/>
    <property type="project" value="Ensembl"/>
</dbReference>
<dbReference type="GO" id="GO:0043325">
    <property type="term" value="F:phosphatidylinositol-3,4-bisphosphate binding"/>
    <property type="evidence" value="ECO:0007669"/>
    <property type="project" value="Ensembl"/>
</dbReference>
<dbReference type="GO" id="GO:0001786">
    <property type="term" value="F:phosphatidylserine binding"/>
    <property type="evidence" value="ECO:0000250"/>
    <property type="project" value="UniProtKB"/>
</dbReference>
<dbReference type="GO" id="GO:0044877">
    <property type="term" value="F:protein-containing complex binding"/>
    <property type="evidence" value="ECO:0007669"/>
    <property type="project" value="Ensembl"/>
</dbReference>
<dbReference type="GO" id="GO:0007155">
    <property type="term" value="P:cell adhesion"/>
    <property type="evidence" value="ECO:0000304"/>
    <property type="project" value="ProtInc"/>
</dbReference>
<dbReference type="GO" id="GO:0001654">
    <property type="term" value="P:eye development"/>
    <property type="evidence" value="ECO:0000304"/>
    <property type="project" value="ProtInc"/>
</dbReference>
<dbReference type="GO" id="GO:0051260">
    <property type="term" value="P:protein homooligomerization"/>
    <property type="evidence" value="ECO:0000314"/>
    <property type="project" value="UniProtKB"/>
</dbReference>
<dbReference type="GO" id="GO:0010842">
    <property type="term" value="P:retina layer formation"/>
    <property type="evidence" value="ECO:0007669"/>
    <property type="project" value="Ensembl"/>
</dbReference>
<dbReference type="GO" id="GO:0007601">
    <property type="term" value="P:visual perception"/>
    <property type="evidence" value="ECO:0000315"/>
    <property type="project" value="UniProtKB"/>
</dbReference>
<dbReference type="CDD" id="cd00057">
    <property type="entry name" value="FA58C"/>
    <property type="match status" value="1"/>
</dbReference>
<dbReference type="FunFam" id="2.60.120.260:FF:000075">
    <property type="entry name" value="Retinoschisin 1"/>
    <property type="match status" value="1"/>
</dbReference>
<dbReference type="Gene3D" id="2.60.120.260">
    <property type="entry name" value="Galactose-binding domain-like"/>
    <property type="match status" value="1"/>
</dbReference>
<dbReference type="InterPro" id="IPR000421">
    <property type="entry name" value="FA58C"/>
</dbReference>
<dbReference type="InterPro" id="IPR008979">
    <property type="entry name" value="Galactose-bd-like_sf"/>
</dbReference>
<dbReference type="InterPro" id="IPR050633">
    <property type="entry name" value="Neuropilin_MCO_CoagFactor"/>
</dbReference>
<dbReference type="PANTHER" id="PTHR46806">
    <property type="entry name" value="F5/8 TYPE C DOMAIN-CONTAINING PROTEIN"/>
    <property type="match status" value="1"/>
</dbReference>
<dbReference type="PANTHER" id="PTHR46806:SF5">
    <property type="entry name" value="F5_8 TYPE C DOMAIN-CONTAINING PROTEIN"/>
    <property type="match status" value="1"/>
</dbReference>
<dbReference type="Pfam" id="PF00754">
    <property type="entry name" value="F5_F8_type_C"/>
    <property type="match status" value="1"/>
</dbReference>
<dbReference type="SMART" id="SM00231">
    <property type="entry name" value="FA58C"/>
    <property type="match status" value="1"/>
</dbReference>
<dbReference type="SUPFAM" id="SSF49785">
    <property type="entry name" value="Galactose-binding domain-like"/>
    <property type="match status" value="1"/>
</dbReference>
<dbReference type="PROSITE" id="PS01285">
    <property type="entry name" value="FA58C_1"/>
    <property type="match status" value="1"/>
</dbReference>
<dbReference type="PROSITE" id="PS50022">
    <property type="entry name" value="FA58C_3"/>
    <property type="match status" value="1"/>
</dbReference>
<protein>
    <recommendedName>
        <fullName>Retinoschisin</fullName>
    </recommendedName>
    <alternativeName>
        <fullName>X-linked juvenile retinoschisis protein</fullName>
    </alternativeName>
</protein>
<accession>O15537</accession>
<accession>Q0QD39</accession>
<keyword id="KW-0002">3D-structure</keyword>
<keyword id="KW-0130">Cell adhesion</keyword>
<keyword id="KW-1003">Cell membrane</keyword>
<keyword id="KW-0225">Disease variant</keyword>
<keyword id="KW-1015">Disulfide bond</keyword>
<keyword id="KW-0446">Lipid-binding</keyword>
<keyword id="KW-0472">Membrane</keyword>
<keyword id="KW-1267">Proteomics identification</keyword>
<keyword id="KW-1185">Reference proteome</keyword>
<keyword id="KW-0964">Secreted</keyword>
<keyword id="KW-0716">Sensory transduction</keyword>
<keyword id="KW-0732">Signal</keyword>
<keyword id="KW-0844">Vision</keyword>
<reference key="1">
    <citation type="journal article" date="1997" name="Nat. Genet.">
        <title>Positional cloning of the gene associated with X-linked juvenile retinoschisis.</title>
        <authorList>
            <person name="Sauer C.G."/>
            <person name="Gehrig A."/>
            <person name="Warneke-Wittstock R."/>
            <person name="Marquardt A."/>
            <person name="Ewing C.C."/>
            <person name="Gibson A."/>
            <person name="Lorenz B."/>
            <person name="Jurklies B."/>
            <person name="Weber B.H."/>
        </authorList>
    </citation>
    <scope>NUCLEOTIDE SEQUENCE [GENOMIC DNA / MRNA]</scope>
    <scope>VARIANTS XLRS1 ARG-96 AND TRP-102</scope>
    <scope>TISSUE SPECIFICITY</scope>
    <source>
        <tissue>Retina</tissue>
    </source>
</reference>
<reference key="2">
    <citation type="journal article" date="2005" name="Nature">
        <title>The DNA sequence of the human X chromosome.</title>
        <authorList>
            <person name="Ross M.T."/>
            <person name="Grafham D.V."/>
            <person name="Coffey A.J."/>
            <person name="Scherer S."/>
            <person name="McLay K."/>
            <person name="Muzny D."/>
            <person name="Platzer M."/>
            <person name="Howell G.R."/>
            <person name="Burrows C."/>
            <person name="Bird C.P."/>
            <person name="Frankish A."/>
            <person name="Lovell F.L."/>
            <person name="Howe K.L."/>
            <person name="Ashurst J.L."/>
            <person name="Fulton R.S."/>
            <person name="Sudbrak R."/>
            <person name="Wen G."/>
            <person name="Jones M.C."/>
            <person name="Hurles M.E."/>
            <person name="Andrews T.D."/>
            <person name="Scott C.E."/>
            <person name="Searle S."/>
            <person name="Ramser J."/>
            <person name="Whittaker A."/>
            <person name="Deadman R."/>
            <person name="Carter N.P."/>
            <person name="Hunt S.E."/>
            <person name="Chen R."/>
            <person name="Cree A."/>
            <person name="Gunaratne P."/>
            <person name="Havlak P."/>
            <person name="Hodgson A."/>
            <person name="Metzker M.L."/>
            <person name="Richards S."/>
            <person name="Scott G."/>
            <person name="Steffen D."/>
            <person name="Sodergren E."/>
            <person name="Wheeler D.A."/>
            <person name="Worley K.C."/>
            <person name="Ainscough R."/>
            <person name="Ambrose K.D."/>
            <person name="Ansari-Lari M.A."/>
            <person name="Aradhya S."/>
            <person name="Ashwell R.I."/>
            <person name="Babbage A.K."/>
            <person name="Bagguley C.L."/>
            <person name="Ballabio A."/>
            <person name="Banerjee R."/>
            <person name="Barker G.E."/>
            <person name="Barlow K.F."/>
            <person name="Barrett I.P."/>
            <person name="Bates K.N."/>
            <person name="Beare D.M."/>
            <person name="Beasley H."/>
            <person name="Beasley O."/>
            <person name="Beck A."/>
            <person name="Bethel G."/>
            <person name="Blechschmidt K."/>
            <person name="Brady N."/>
            <person name="Bray-Allen S."/>
            <person name="Bridgeman A.M."/>
            <person name="Brown A.J."/>
            <person name="Brown M.J."/>
            <person name="Bonnin D."/>
            <person name="Bruford E.A."/>
            <person name="Buhay C."/>
            <person name="Burch P."/>
            <person name="Burford D."/>
            <person name="Burgess J."/>
            <person name="Burrill W."/>
            <person name="Burton J."/>
            <person name="Bye J.M."/>
            <person name="Carder C."/>
            <person name="Carrel L."/>
            <person name="Chako J."/>
            <person name="Chapman J.C."/>
            <person name="Chavez D."/>
            <person name="Chen E."/>
            <person name="Chen G."/>
            <person name="Chen Y."/>
            <person name="Chen Z."/>
            <person name="Chinault C."/>
            <person name="Ciccodicola A."/>
            <person name="Clark S.Y."/>
            <person name="Clarke G."/>
            <person name="Clee C.M."/>
            <person name="Clegg S."/>
            <person name="Clerc-Blankenburg K."/>
            <person name="Clifford K."/>
            <person name="Cobley V."/>
            <person name="Cole C.G."/>
            <person name="Conquer J.S."/>
            <person name="Corby N."/>
            <person name="Connor R.E."/>
            <person name="David R."/>
            <person name="Davies J."/>
            <person name="Davis C."/>
            <person name="Davis J."/>
            <person name="Delgado O."/>
            <person name="Deshazo D."/>
            <person name="Dhami P."/>
            <person name="Ding Y."/>
            <person name="Dinh H."/>
            <person name="Dodsworth S."/>
            <person name="Draper H."/>
            <person name="Dugan-Rocha S."/>
            <person name="Dunham A."/>
            <person name="Dunn M."/>
            <person name="Durbin K.J."/>
            <person name="Dutta I."/>
            <person name="Eades T."/>
            <person name="Ellwood M."/>
            <person name="Emery-Cohen A."/>
            <person name="Errington H."/>
            <person name="Evans K.L."/>
            <person name="Faulkner L."/>
            <person name="Francis F."/>
            <person name="Frankland J."/>
            <person name="Fraser A.E."/>
            <person name="Galgoczy P."/>
            <person name="Gilbert J."/>
            <person name="Gill R."/>
            <person name="Gloeckner G."/>
            <person name="Gregory S.G."/>
            <person name="Gribble S."/>
            <person name="Griffiths C."/>
            <person name="Grocock R."/>
            <person name="Gu Y."/>
            <person name="Gwilliam R."/>
            <person name="Hamilton C."/>
            <person name="Hart E.A."/>
            <person name="Hawes A."/>
            <person name="Heath P.D."/>
            <person name="Heitmann K."/>
            <person name="Hennig S."/>
            <person name="Hernandez J."/>
            <person name="Hinzmann B."/>
            <person name="Ho S."/>
            <person name="Hoffs M."/>
            <person name="Howden P.J."/>
            <person name="Huckle E.J."/>
            <person name="Hume J."/>
            <person name="Hunt P.J."/>
            <person name="Hunt A.R."/>
            <person name="Isherwood J."/>
            <person name="Jacob L."/>
            <person name="Johnson D."/>
            <person name="Jones S."/>
            <person name="de Jong P.J."/>
            <person name="Joseph S.S."/>
            <person name="Keenan S."/>
            <person name="Kelly S."/>
            <person name="Kershaw J.K."/>
            <person name="Khan Z."/>
            <person name="Kioschis P."/>
            <person name="Klages S."/>
            <person name="Knights A.J."/>
            <person name="Kosiura A."/>
            <person name="Kovar-Smith C."/>
            <person name="Laird G.K."/>
            <person name="Langford C."/>
            <person name="Lawlor S."/>
            <person name="Leversha M."/>
            <person name="Lewis L."/>
            <person name="Liu W."/>
            <person name="Lloyd C."/>
            <person name="Lloyd D.M."/>
            <person name="Loulseged H."/>
            <person name="Loveland J.E."/>
            <person name="Lovell J.D."/>
            <person name="Lozado R."/>
            <person name="Lu J."/>
            <person name="Lyne R."/>
            <person name="Ma J."/>
            <person name="Maheshwari M."/>
            <person name="Matthews L.H."/>
            <person name="McDowall J."/>
            <person name="McLaren S."/>
            <person name="McMurray A."/>
            <person name="Meidl P."/>
            <person name="Meitinger T."/>
            <person name="Milne S."/>
            <person name="Miner G."/>
            <person name="Mistry S.L."/>
            <person name="Morgan M."/>
            <person name="Morris S."/>
            <person name="Mueller I."/>
            <person name="Mullikin J.C."/>
            <person name="Nguyen N."/>
            <person name="Nordsiek G."/>
            <person name="Nyakatura G."/>
            <person name="O'dell C.N."/>
            <person name="Okwuonu G."/>
            <person name="Palmer S."/>
            <person name="Pandian R."/>
            <person name="Parker D."/>
            <person name="Parrish J."/>
            <person name="Pasternak S."/>
            <person name="Patel D."/>
            <person name="Pearce A.V."/>
            <person name="Pearson D.M."/>
            <person name="Pelan S.E."/>
            <person name="Perez L."/>
            <person name="Porter K.M."/>
            <person name="Ramsey Y."/>
            <person name="Reichwald K."/>
            <person name="Rhodes S."/>
            <person name="Ridler K.A."/>
            <person name="Schlessinger D."/>
            <person name="Schueler M.G."/>
            <person name="Sehra H.K."/>
            <person name="Shaw-Smith C."/>
            <person name="Shen H."/>
            <person name="Sheridan E.M."/>
            <person name="Shownkeen R."/>
            <person name="Skuce C.D."/>
            <person name="Smith M.L."/>
            <person name="Sotheran E.C."/>
            <person name="Steingruber H.E."/>
            <person name="Steward C.A."/>
            <person name="Storey R."/>
            <person name="Swann R.M."/>
            <person name="Swarbreck D."/>
            <person name="Tabor P.E."/>
            <person name="Taudien S."/>
            <person name="Taylor T."/>
            <person name="Teague B."/>
            <person name="Thomas K."/>
            <person name="Thorpe A."/>
            <person name="Timms K."/>
            <person name="Tracey A."/>
            <person name="Trevanion S."/>
            <person name="Tromans A.C."/>
            <person name="d'Urso M."/>
            <person name="Verduzco D."/>
            <person name="Villasana D."/>
            <person name="Waldron L."/>
            <person name="Wall M."/>
            <person name="Wang Q."/>
            <person name="Warren J."/>
            <person name="Warry G.L."/>
            <person name="Wei X."/>
            <person name="West A."/>
            <person name="Whitehead S.L."/>
            <person name="Whiteley M.N."/>
            <person name="Wilkinson J.E."/>
            <person name="Willey D.L."/>
            <person name="Williams G."/>
            <person name="Williams L."/>
            <person name="Williamson A."/>
            <person name="Williamson H."/>
            <person name="Wilming L."/>
            <person name="Woodmansey R.L."/>
            <person name="Wray P.W."/>
            <person name="Yen J."/>
            <person name="Zhang J."/>
            <person name="Zhou J."/>
            <person name="Zoghbi H."/>
            <person name="Zorilla S."/>
            <person name="Buck D."/>
            <person name="Reinhardt R."/>
            <person name="Poustka A."/>
            <person name="Rosenthal A."/>
            <person name="Lehrach H."/>
            <person name="Meindl A."/>
            <person name="Minx P.J."/>
            <person name="Hillier L.W."/>
            <person name="Willard H.F."/>
            <person name="Wilson R.K."/>
            <person name="Waterston R.H."/>
            <person name="Rice C.M."/>
            <person name="Vaudin M."/>
            <person name="Coulson A."/>
            <person name="Nelson D.L."/>
            <person name="Weinstock G."/>
            <person name="Sulston J.E."/>
            <person name="Durbin R.M."/>
            <person name="Hubbard T."/>
            <person name="Gibbs R.A."/>
            <person name="Beck S."/>
            <person name="Rogers J."/>
            <person name="Bentley D.R."/>
        </authorList>
    </citation>
    <scope>NUCLEOTIDE SEQUENCE [LARGE SCALE GENOMIC DNA]</scope>
</reference>
<reference key="3">
    <citation type="journal article" date="2007" name="BMC Genomics">
        <title>Mapping of transcription start sites of human retina expressed genes.</title>
        <authorList>
            <person name="Roni V."/>
            <person name="Carpio R."/>
            <person name="Wissinger B."/>
        </authorList>
    </citation>
    <scope>NUCLEOTIDE SEQUENCE [LARGE SCALE MRNA] OF 1-35</scope>
    <source>
        <tissue>Retina</tissue>
    </source>
</reference>
<reference key="4">
    <citation type="journal article" date="2000" name="Hum. Mol. Genet.">
        <title>Retinoschisin, the X-linked retinoschisis protein, is a secreted photoreceptor protein, and is expressed and released by Weri-Rb1 cells.</title>
        <authorList>
            <person name="Grayson C."/>
            <person name="Reid S.N."/>
            <person name="Ellis J.A."/>
            <person name="Rutherford A."/>
            <person name="Sowden J.C."/>
            <person name="Yates J.R."/>
            <person name="Farber D.B."/>
            <person name="Trump D."/>
        </authorList>
    </citation>
    <scope>TISSUE SPECIFICITY</scope>
    <scope>DEVELOPMENTAL STAGE</scope>
    <scope>SUBCELLULAR LOCATION</scope>
</reference>
<reference key="5">
    <citation type="journal article" date="2005" name="J. Biol. Chem.">
        <title>RS1, a discoidin domain-containing retinal cell adhesion protein associated with X-linked retinoschisis, exists as a novel disulfide-linked octamer.</title>
        <authorList>
            <person name="Wu W.W."/>
            <person name="Wong J.P."/>
            <person name="Kast J."/>
            <person name="Molday R.S."/>
        </authorList>
    </citation>
    <scope>SUBUNIT</scope>
    <scope>DISULFIDE BONDS</scope>
</reference>
<reference key="6">
    <citation type="journal article" date="2009" name="Biochem. J.">
        <title>Wild-type and missense mutants of retinoschisin co-assemble resulting in either intracellular retention or incorrect assembly of the functionally active octamer.</title>
        <authorList>
            <person name="Gleghorn L.J."/>
            <person name="Trump D."/>
            <person name="Bulleid N.J."/>
        </authorList>
    </citation>
    <scope>SUBCELLULAR LOCATION</scope>
    <scope>SUBUNIT</scope>
    <scope>CHARACTERIZATION OF VARIANTS XLRS1 SER-59 AND TYR-110</scope>
</reference>
<reference key="7">
    <citation type="journal article" date="2016" name="Hum. Mol. Genet.">
        <title>Structural analysis of X-linked retinoschisis mutations reveals distinct classes which differentially effect retinoschisin function.</title>
        <authorList>
            <person name="Ramsay E.P."/>
            <person name="Collins R.F."/>
            <person name="Owens T.W."/>
            <person name="Siebert C.A."/>
            <person name="Jones R.P."/>
            <person name="Wang T."/>
            <person name="Roseman A.M."/>
            <person name="Baldock C."/>
        </authorList>
    </citation>
    <scope>STRUCTURE BY ELECTRON MICROSCOPY (4.2 ANGSTROMS)</scope>
    <scope>SUBUNIT</scope>
    <scope>CHARACTERIZATION OF VARIANTS XLRS1 HIS-141 AND GLN-207</scope>
</reference>
<reference key="8">
    <citation type="journal article" date="2016" name="PLoS ONE">
        <title>Cog-Wheel Octameric Structure of RS1, the Discoidin Domain Containing Retinal Protein Associated with X-Linked Retinoschisis.</title>
        <authorList>
            <person name="Bush M."/>
            <person name="Setiaputra D."/>
            <person name="Yip C.K."/>
            <person name="Molday R.S."/>
        </authorList>
    </citation>
    <scope>STRUCTURE BY ELECTRON MICROSCOPY</scope>
    <scope>SUBCELLULAR LOCATION</scope>
    <scope>SUBUNIT</scope>
</reference>
<reference evidence="24" key="9">
    <citation type="journal article" date="2016" name="Proc. Natl. Acad. Sci. U.S.A.">
        <title>Paired octamer rings of retinoschisin suggest a junctional model for cell-cell adhesion in the retina.</title>
        <authorList>
            <person name="Tolun G."/>
            <person name="Vijayasarathy C."/>
            <person name="Huang R."/>
            <person name="Zeng Y."/>
            <person name="Li Y."/>
            <person name="Steven A.C."/>
            <person name="Sieving P.A."/>
            <person name="Heymann J.B."/>
        </authorList>
    </citation>
    <scope>STRUCTURE BY ELECTRON MICROSCOPY (4.10 ANGSTROMS) OF 24-224</scope>
    <scope>SUBUNIT</scope>
    <scope>DISULFIDE BONDS</scope>
</reference>
<reference key="10">
    <citation type="journal article" date="1998" name="Hum. Genet.">
        <title>Japanese juvenile retinoschisis is caused by mutations of the XLRS1 gene.</title>
        <authorList>
            <person name="Hotta Y."/>
            <person name="Fujiki K."/>
            <person name="Hayakawa M."/>
            <person name="Ohta T."/>
            <person name="Fujimaki T."/>
            <person name="Tamaki K."/>
            <person name="Yokoyama T."/>
            <person name="Kanai A."/>
            <person name="Hirakata A."/>
            <person name="Hida T."/>
            <person name="Nishina S."/>
            <person name="Azuma N."/>
        </authorList>
    </citation>
    <scope>VARIANTS XLRS1 LYS-72 AND LEU-193</scope>
</reference>
<reference key="11">
    <citation type="journal article" date="1998" name="Hum. Mol. Genet.">
        <title>Functional implications of the spectrum of mutations found in 234 cases with X-linked juvenile retinoschisis. The Retinoschisis Consortium.</title>
        <authorList>
            <consortium name="The Retinoschisis Consortium"/>
        </authorList>
    </citation>
    <scope>VARIANTS XLRS1 HIS-12; CYS-65; ASP-72; ARG-103; CYS-112; PHE-113; PRO-127; VAL-135; THR-136; ALA-138; ARG-140; GLU-140; GLY-141; VAL-143; ASP-146; CYS-155; ASP-178; ARG-192; THR-199; TRP-213; GLN-215; PRO-216; ARG-219; GLY-219 AND ASN-222</scope>
</reference>
<reference key="12">
    <citation type="journal article" date="1999" name="Biochem. Biophys. Res. Commun.">
        <title>Recurrent missense (R197C) and nonsense (Y89X) mutations in the XLRS1 gene in families with X-linked retinoschisis.</title>
        <authorList>
            <person name="Shastry B.S."/>
            <person name="Hejtmancik F.J."/>
            <person name="Trese M.T."/>
        </authorList>
    </citation>
    <scope>VARIANT XLRS1 CYS-197</scope>
</reference>
<reference key="13">
    <citation type="journal article" date="1999" name="Clin. Genet.">
        <title>Assessment of RS1 in X-linked juvenile retinoschisis and sporadic senile retinoschisis.</title>
        <authorList>
            <person name="Gehrig A."/>
            <person name="White K."/>
            <person name="Lorenz B."/>
            <person name="Andrassi M."/>
            <person name="Clemens S."/>
            <person name="Weber B.H."/>
        </authorList>
    </citation>
    <scope>VARIANTS XLRS1 GLU-98; CYS-108; TRP-109; CYS-141; LYS-146; CYS-200 AND LYS-215</scope>
</reference>
<reference key="14">
    <citation type="journal article" date="1999" name="Eur. J. Hum. Genet.">
        <title>Three widespread founder mutations contribute to high incidence of X-linked juvenile retinoschisis in Finland.</title>
        <authorList>
            <person name="Huopaniemi L."/>
            <person name="Rantala A."/>
            <person name="Forsius H."/>
            <person name="Somer M."/>
            <person name="de la Chapelle A."/>
            <person name="Alitalo T."/>
        </authorList>
    </citation>
    <scope>VARIANTS XLRS1 LYS-72; VAL-74 AND ARG-109</scope>
</reference>
<reference key="15">
    <citation type="journal article" date="1999" name="Hum. Mutat.">
        <title>X-linked retinoschisis with a novel substitutive amino acid (P193S) in XLRS1.</title>
        <authorList>
            <person name="Duval P.-A."/>
            <person name="Marlhens F."/>
            <person name="Griffoin J.-M."/>
            <person name="Millet P."/>
            <person name="Arnaud B."/>
            <person name="Hamel C.P."/>
        </authorList>
    </citation>
    <scope>VARIANT XLRS1 SER-193</scope>
</reference>
<reference key="16">
    <citation type="journal article" date="1999" name="Hum. Mutat.">
        <title>Identification of four novel mutations of the XLRS1 gene in Japanese patients with X-linked juvenile retinoschisis.</title>
        <authorList>
            <person name="Mashima Y."/>
            <person name="Shinoda K."/>
            <person name="Ishida S."/>
            <person name="Ozawa Y."/>
            <person name="Kudoh J."/>
            <person name="Iwata T."/>
            <person name="Oguchi Y."/>
            <person name="Shimizu N."/>
        </authorList>
    </citation>
    <scope>VARIANTS XLRS1 LYS-72; CYS-89; GLU-109; CYS-182 AND LEU-203</scope>
</reference>
<reference key="17">
    <citation type="journal article" date="1999" name="Hum. Mutat.">
        <title>Novel mutations in XLRS1 causing retinoschisis, including first evidence of putative leader sequence change.</title>
        <authorList>
            <person name="Hiriyanna K.T."/>
            <person name="Bingham E.L."/>
            <person name="Yashar B.M."/>
            <person name="Ayyagari R."/>
            <person name="Fishman G."/>
            <person name="Small K.W."/>
            <person name="Weinberg D.V."/>
            <person name="Weleber R.G."/>
            <person name="Lewis R.A."/>
            <person name="Andreasson S."/>
            <person name="Richards J.E."/>
            <person name="Sieving P.A."/>
        </authorList>
    </citation>
    <scope>VARIANTS XLRS1 PRO-13; SER-70; ALA-70; LYS-72; VAL-74; ASN-85 DEL; ARG-96; GLN-102; ARG-140; TRP-142; CYS-163; SER-192; CYS-200; HIS-200 AND ARG-223</scope>
</reference>
<reference key="18">
    <citation type="journal article" date="2007" name="Am. J. Med. Genet. A">
        <title>X-linked retinoschisis in a female with a heterozygous RS1 missense mutation.</title>
        <authorList>
            <person name="Saldana M."/>
            <person name="Thompson J."/>
            <person name="Monk E."/>
            <person name="Trump D."/>
            <person name="Long V."/>
            <person name="Sheridan E."/>
        </authorList>
    </citation>
    <scope>VARIANT XLRS1 GLN-102</scope>
</reference>
<reference key="19">
    <citation type="journal article" date="2007" name="Am. J. Ophthalmol.">
        <title>Unusual manifestations of x-linked retinoschisis: clinical profile and diagnostic evaluation.</title>
        <authorList>
            <person name="Shukla D."/>
            <person name="Rajendran A."/>
            <person name="Gibbs D."/>
            <person name="Suganthalakshmi B."/>
            <person name="Zhang K."/>
            <person name="Sundaresan P."/>
        </authorList>
    </citation>
    <scope>VARIANTS XLRS1 GLY-72; HIS-141; HIS-197; CYS-200 AND CYS-206</scope>
</reference>
<reference key="20">
    <citation type="journal article" date="2007" name="Mol. Vis.">
        <title>Clinical features of X linked juvenile retinoschisis in Chinese families associated with novel mutations in the RS1 gene.</title>
        <authorList>
            <person name="Li X."/>
            <person name="Ma X."/>
            <person name="Tao Y."/>
        </authorList>
    </citation>
    <scope>VARIANTS XLRS1 PRO-73; GLN-102; HIS-145; GLY-156; CYS-200; HIS-209; GLN-213 AND ARG-223</scope>
</reference>
<reference key="21">
    <citation type="journal article" date="2008" name="Mol. Vis.">
        <title>Clinical and genetic findings in Hungarian patients with X-linked juvenile retinoschisis.</title>
        <authorList>
            <person name="Lesch B."/>
            <person name="Szabo V."/>
            <person name="Kanya M."/>
            <person name="Somfai G.M."/>
            <person name="Vamos R."/>
            <person name="Varsanyi B."/>
            <person name="Pamer Z."/>
            <person name="Knezy K."/>
            <person name="Salacz G."/>
            <person name="Janaky M."/>
            <person name="Ferencz M."/>
            <person name="Hargitai J."/>
            <person name="Papp A."/>
            <person name="Farkas A."/>
        </authorList>
    </citation>
    <scope>VARIANTS XLRS1 LYS-72; ARG-140; CYS-141; HIS-141; SER-192; LEU-192 AND CYS-209</scope>
    <scope>FUNCTION</scope>
</reference>
<feature type="signal peptide" evidence="2">
    <location>
        <begin position="1"/>
        <end position="23"/>
    </location>
</feature>
<feature type="chain" id="PRO_0000022695" description="Retinoschisin">
    <location>
        <begin position="24"/>
        <end position="224"/>
    </location>
</feature>
<feature type="domain" description="F5/8 type C" evidence="3">
    <location>
        <begin position="63"/>
        <end position="219"/>
    </location>
</feature>
<feature type="disulfide bond" description="Interchain" evidence="3 10">
    <location>
        <position position="40"/>
    </location>
</feature>
<feature type="disulfide bond" description="Interchain (with C-223)" evidence="3 10">
    <location>
        <position position="59"/>
    </location>
</feature>
<feature type="disulfide bond" evidence="3 10 24">
    <location>
        <begin position="63"/>
        <end position="219"/>
    </location>
</feature>
<feature type="disulfide bond" evidence="3 10 24">
    <location>
        <begin position="110"/>
        <end position="142"/>
    </location>
</feature>
<feature type="disulfide bond" description="Interchain (with C-59)" evidence="3 10">
    <location>
        <position position="223"/>
    </location>
</feature>
<feature type="sequence variant" id="VAR_008209" description="In XLRS1; dbSNP:rs62645879." evidence="20">
    <original>L</original>
    <variation>H</variation>
    <location>
        <position position="12"/>
    </location>
</feature>
<feature type="sequence variant" id="VAR_008210" description="In XLRS1; dbSNP:rs104894935." evidence="8">
    <original>L</original>
    <variation>P</variation>
    <location>
        <position position="13"/>
    </location>
</feature>
<feature type="sequence variant" id="VAR_008211" description="In XLRS1; loss of octamerization; no effect on secretion; dbSNP:rs62645889." evidence="18">
    <original>C</original>
    <variation>S</variation>
    <location>
        <position position="59"/>
    </location>
</feature>
<feature type="sequence variant" id="VAR_008212" description="In XLRS1; dbSNP:rs62645892." evidence="20">
    <original>Y</original>
    <variation>C</variation>
    <location>
        <position position="65"/>
    </location>
</feature>
<feature type="sequence variant" id="VAR_008213" description="In XLRS1; dbSNP:rs62645895." evidence="8">
    <original>G</original>
    <variation>A</variation>
    <location>
        <position position="70"/>
    </location>
</feature>
<feature type="sequence variant" id="VAR_008214" description="In XLRS1; dbSNP:rs62645894." evidence="8">
    <original>G</original>
    <variation>S</variation>
    <location>
        <position position="70"/>
    </location>
</feature>
<feature type="sequence variant" id="VAR_008180" description="In XLRS1; dbSNP:rs104894932." evidence="20">
    <original>E</original>
    <variation>D</variation>
    <location>
        <position position="72"/>
    </location>
</feature>
<feature type="sequence variant" id="VAR_080439" description="In XLRS1; dbSNP:rs1927823799." evidence="13">
    <original>E</original>
    <variation>G</variation>
    <location>
        <position position="72"/>
    </location>
</feature>
<feature type="sequence variant" id="VAR_008181" description="In XLRS1; dbSNP:rs104894928." evidence="5 6 8 14 21">
    <original>E</original>
    <variation>K</variation>
    <location>
        <position position="72"/>
    </location>
</feature>
<feature type="sequence variant" id="VAR_065326" description="In XLRS1; dbSNP:rs62645899." evidence="12">
    <original>S</original>
    <variation>P</variation>
    <location>
        <position position="73"/>
    </location>
</feature>
<feature type="sequence variant" id="VAR_008182" description="In XLRS1; dbSNP:rs104894933." evidence="6 8">
    <original>G</original>
    <variation>V</variation>
    <location>
        <position position="74"/>
    </location>
</feature>
<feature type="sequence variant" id="VAR_023959" description="In XLRS1; dbSNP:rs61750458." evidence="8">
    <location>
        <position position="85"/>
    </location>
</feature>
<feature type="sequence variant" id="VAR_008215" description="In XLRS1; dbSNP:rs61752060." evidence="5">
    <original>Y</original>
    <variation>C</variation>
    <location>
        <position position="89"/>
    </location>
</feature>
<feature type="sequence variant" id="VAR_008183" description="In XLRS1; dbSNP:rs61752063." evidence="8 19">
    <original>W</original>
    <variation>R</variation>
    <location>
        <position position="96"/>
    </location>
</feature>
<feature type="sequence variant" id="VAR_008216" description="In XLRS1; dbSNP:rs61752065." evidence="7">
    <original>A</original>
    <variation>E</variation>
    <location>
        <position position="98"/>
    </location>
</feature>
<feature type="sequence variant" id="VAR_008217" description="In XLRS1; dbSNP:rs61752068." evidence="8 11 12">
    <original>R</original>
    <variation>Q</variation>
    <location>
        <position position="102"/>
    </location>
</feature>
<feature type="sequence variant" id="VAR_008184" description="In XLRS1; dbSNP:rs61752067." evidence="19">
    <original>R</original>
    <variation>W</variation>
    <location>
        <position position="102"/>
    </location>
</feature>
<feature type="sequence variant" id="VAR_008218" description="In XLRS1; dbSNP:rs61752069." evidence="20">
    <original>L</original>
    <variation>R</variation>
    <location>
        <position position="103"/>
    </location>
</feature>
<feature type="sequence variant" id="VAR_008219" description="In XLRS1; dbSNP:rs61752072." evidence="7">
    <original>F</original>
    <variation>C</variation>
    <location>
        <position position="108"/>
    </location>
</feature>
<feature type="sequence variant" id="VAR_008220" description="In XLRS1; dbSNP:rs281865345." evidence="5">
    <original>G</original>
    <variation>E</variation>
    <location>
        <position position="109"/>
    </location>
</feature>
<feature type="sequence variant" id="VAR_008185" description="In XLRS1; dbSNP:rs104894934." evidence="6">
    <original>G</original>
    <variation>R</variation>
    <location>
        <position position="109"/>
    </location>
</feature>
<feature type="sequence variant" id="VAR_008221" description="In XLRS1; dbSNP:rs104894934." evidence="7">
    <original>G</original>
    <variation>W</variation>
    <location>
        <position position="109"/>
    </location>
</feature>
<feature type="sequence variant" id="VAR_008222" description="In XLRS1; loss of secretion into the extracellular space; may impair protein folding; dbSNP:rs61752075." evidence="15">
    <original>C</original>
    <variation>Y</variation>
    <location>
        <position position="110"/>
    </location>
</feature>
<feature type="sequence variant" id="VAR_008223" description="In XLRS1; dbSNP:rs61752144." evidence="20">
    <original>W</original>
    <variation>C</variation>
    <location>
        <position position="112"/>
    </location>
</feature>
<feature type="sequence variant" id="VAR_008224" description="In XLRS1; dbSNP:rs61752145." evidence="20">
    <original>L</original>
    <variation>F</variation>
    <location>
        <position position="113"/>
    </location>
</feature>
<feature type="sequence variant" id="VAR_008225" description="In XLRS1; dbSNP:rs61752149." evidence="20">
    <original>L</original>
    <variation>P</variation>
    <location>
        <position position="127"/>
    </location>
</feature>
<feature type="sequence variant" id="VAR_008226" description="In XLRS1; dbSNP:rs61752152." evidence="20">
    <original>G</original>
    <variation>V</variation>
    <location>
        <position position="135"/>
    </location>
</feature>
<feature type="sequence variant" id="VAR_008227" description="In XLRS1; dbSNP:rs61752153." evidence="20">
    <original>I</original>
    <variation>T</variation>
    <location>
        <position position="136"/>
    </location>
</feature>
<feature type="sequence variant" id="VAR_008228" description="In XLRS1; dbSNP:rs61752154." evidence="20">
    <original>T</original>
    <variation>A</variation>
    <location>
        <position position="138"/>
    </location>
</feature>
<feature type="sequence variant" id="VAR_008229" description="In XLRS1; dbSNP:rs61752157." evidence="20">
    <original>G</original>
    <variation>E</variation>
    <location>
        <position position="140"/>
    </location>
</feature>
<feature type="sequence variant" id="VAR_008230" description="In XLRS1; dbSNP:rs61752156." evidence="8 14">
    <original>G</original>
    <variation>R</variation>
    <location>
        <position position="140"/>
    </location>
</feature>
<feature type="sequence variant" id="VAR_008231" description="In XLRS1; dbSNP:rs61752158." evidence="7 14">
    <original>R</original>
    <variation>C</variation>
    <location>
        <position position="141"/>
    </location>
</feature>
<feature type="sequence variant" id="VAR_008232" description="In XLRS1; dbSNP:rs61752158." evidence="20">
    <original>R</original>
    <variation>G</variation>
    <location>
        <position position="141"/>
    </location>
</feature>
<feature type="sequence variant" id="VAR_008233" description="In XLRS1; no effect on oligomerization; no effect on protein stability; dbSNP:rs61752159." evidence="13 14 18">
    <original>R</original>
    <variation>H</variation>
    <location>
        <position position="141"/>
    </location>
</feature>
<feature type="sequence variant" id="VAR_008234" description="In XLRS1; dbSNP:rs1800001." evidence="8">
    <original>C</original>
    <variation>W</variation>
    <location>
        <position position="142"/>
    </location>
</feature>
<feature type="sequence variant" id="VAR_008235" description="In XLRS1; dbSNP:rs61753161." evidence="20">
    <original>D</original>
    <variation>V</variation>
    <location>
        <position position="143"/>
    </location>
</feature>
<feature type="sequence variant" id="VAR_065327" description="In XLRS1." evidence="12">
    <original>D</original>
    <variation>H</variation>
    <location>
        <position position="145"/>
    </location>
</feature>
<feature type="sequence variant" id="VAR_008236" description="In XLRS1; dbSNP:rs61753163." evidence="20">
    <original>E</original>
    <variation>D</variation>
    <location>
        <position position="146"/>
    </location>
</feature>
<feature type="sequence variant" id="VAR_008237" description="In XLRS1; dbSNP:rs61753162." evidence="7">
    <original>E</original>
    <variation>K</variation>
    <location>
        <position position="146"/>
    </location>
</feature>
<feature type="sequence variant" id="VAR_008238" description="In XLRS1; dbSNP:rs61753165." evidence="20">
    <original>Y</original>
    <variation>C</variation>
    <location>
        <position position="155"/>
    </location>
</feature>
<feature type="sequence variant" id="VAR_065328" description="In XLRS1; dbSNP:rs2147191190." evidence="12">
    <original>R</original>
    <variation>G</variation>
    <location>
        <position position="156"/>
    </location>
</feature>
<feature type="sequence variant" id="VAR_008239" description="In dbSNP:rs1800002.">
    <original>D</original>
    <variation>N</variation>
    <location>
        <position position="158"/>
    </location>
</feature>
<feature type="sequence variant" id="VAR_008240" description="In XLRS1; dbSNP:rs61753166." evidence="8">
    <original>W</original>
    <variation>C</variation>
    <location>
        <position position="163"/>
    </location>
</feature>
<feature type="sequence variant" id="VAR_008241" description="In XLRS1; dbSNP:rs61753169." evidence="20">
    <original>G</original>
    <variation>D</variation>
    <location>
        <position position="178"/>
    </location>
</feature>
<feature type="sequence variant" id="VAR_008242" description="In XLRS1; dbSNP:rs61753171." evidence="5">
    <original>R</original>
    <variation>C</variation>
    <location>
        <position position="182"/>
    </location>
</feature>
<feature type="sequence variant" id="VAR_065329" description="In XLRS1; dbSNP:rs61753175." evidence="14">
    <original>P</original>
    <variation>L</variation>
    <location>
        <position position="192"/>
    </location>
</feature>
<feature type="sequence variant" id="VAR_008243" description="In XLRS1; dbSNP:rs61753175." evidence="20">
    <original>P</original>
    <variation>R</variation>
    <location>
        <position position="192"/>
    </location>
</feature>
<feature type="sequence variant" id="VAR_008244" description="In XLRS1; dbSNP:rs61753174." evidence="8 14">
    <original>P</original>
    <variation>S</variation>
    <location>
        <position position="192"/>
    </location>
</feature>
<feature type="sequence variant" id="VAR_008245" description="In XLRS1; dbSNP:rs281865352." evidence="21">
    <original>P</original>
    <variation>L</variation>
    <location>
        <position position="193"/>
    </location>
</feature>
<feature type="sequence variant" id="VAR_008246" description="In XLRS1; dbSNP:rs281865351." evidence="22">
    <original>P</original>
    <variation>S</variation>
    <location>
        <position position="193"/>
    </location>
</feature>
<feature type="sequence variant" id="VAR_008247" description="In XLRS1; dbSNP:rs281865354." evidence="4">
    <original>R</original>
    <variation>C</variation>
    <location>
        <position position="197"/>
    </location>
</feature>
<feature type="sequence variant" id="VAR_008248" description="In XLRS1; dbSNP:rs281865355." evidence="13">
    <original>R</original>
    <variation>H</variation>
    <location>
        <position position="197"/>
    </location>
</feature>
<feature type="sequence variant" id="VAR_008249" description="In XLRS1; dbSNP:rs281865356." evidence="20">
    <original>I</original>
    <variation>T</variation>
    <location>
        <position position="199"/>
    </location>
</feature>
<feature type="sequence variant" id="VAR_008251" description="In XLRS1; dbSNP:rs281865357." evidence="7 8 12 13">
    <original>R</original>
    <variation>C</variation>
    <location>
        <position position="200"/>
    </location>
</feature>
<feature type="sequence variant" id="VAR_008252" description="In XLRS1; dbSNP:rs281865358." evidence="8">
    <original>R</original>
    <variation>H</variation>
    <location>
        <position position="200"/>
    </location>
</feature>
<feature type="sequence variant" id="VAR_008253" description="In XLRS1; dbSNP:rs104894930." evidence="5">
    <original>P</original>
    <variation>L</variation>
    <location>
        <position position="203"/>
    </location>
</feature>
<feature type="sequence variant" id="VAR_080440" description="In XLRS1." evidence="13">
    <original>W</original>
    <variation>C</variation>
    <location>
        <position position="206"/>
    </location>
</feature>
<feature type="sequence variant" id="VAR_008254" description="In XLRS1; decreases protein stability; does not abrogate oligomerization or secretion; dbSNP:rs281865360." evidence="15">
    <original>H</original>
    <variation>Q</variation>
    <location>
        <position position="207"/>
    </location>
</feature>
<feature type="sequence variant" id="VAR_065330" description="In XLRS1; dbSNP:rs281865361." evidence="14">
    <original>R</original>
    <variation>C</variation>
    <location>
        <position position="209"/>
    </location>
</feature>
<feature type="sequence variant" id="VAR_008255" description="In XLRS1; dbSNP:rs281865362." evidence="12">
    <original>R</original>
    <variation>H</variation>
    <location>
        <position position="209"/>
    </location>
</feature>
<feature type="sequence variant" id="VAR_065331" description="In XLRS1; dbSNP:rs281865364." evidence="12">
    <original>R</original>
    <variation>Q</variation>
    <location>
        <position position="213"/>
    </location>
</feature>
<feature type="sequence variant" id="VAR_008256" description="In XLRS1; dbSNP:rs281865365." evidence="20">
    <original>R</original>
    <variation>W</variation>
    <location>
        <position position="213"/>
    </location>
</feature>
<feature type="sequence variant" id="VAR_008257" description="In XLRS1; dbSNP:rs281865367." evidence="7">
    <original>E</original>
    <variation>K</variation>
    <location>
        <position position="215"/>
    </location>
</feature>
<feature type="sequence variant" id="VAR_008258" description="In XLRS1; dbSNP:rs281865367." evidence="20">
    <original>E</original>
    <variation>Q</variation>
    <location>
        <position position="215"/>
    </location>
</feature>
<feature type="sequence variant" id="VAR_008259" description="In XLRS1; dbSNP:rs281865368." evidence="20">
    <original>L</original>
    <variation>P</variation>
    <location>
        <position position="216"/>
    </location>
</feature>
<feature type="sequence variant" id="VAR_008260" description="In XLRS1; dbSNP:rs281865369." evidence="20">
    <original>C</original>
    <variation>G</variation>
    <location>
        <position position="219"/>
    </location>
</feature>
<feature type="sequence variant" id="VAR_008261" description="In XLRS1; dbSNP:rs281865369." evidence="20">
    <original>C</original>
    <variation>R</variation>
    <location>
        <position position="219"/>
    </location>
</feature>
<feature type="sequence variant" id="VAR_012078" description="In XLRS1; dbSNP:rs1800004." evidence="20">
    <original>K</original>
    <variation>N</variation>
    <location>
        <position position="222"/>
    </location>
</feature>
<feature type="sequence variant" id="VAR_008262" description="In XLRS1; dbSNP:rs104894929." evidence="8 12">
    <original>C</original>
    <variation>R</variation>
    <location>
        <position position="223"/>
    </location>
</feature>
<comment type="function">
    <text evidence="1 14 23">Binds negatively charged membrane lipids, such as phosphatidylserine and phosphoinositides (By similarity). May play a role in cell-cell adhesion processes in the retina, via homomeric interaction between octamers present on the surface of two neighboring cells (PubMed:27114531). Required for normal structure and function of the retina (PubMed:19093009).</text>
</comment>
<comment type="subunit">
    <text evidence="10 15 16 17 18">Homooctamer of 4 homodimers; disulfide-linked (PubMed:15644328, PubMed:19849666). The homooctamer has a flat, cogwheel structure with a diameter of about 14 nm (PubMed:26812435, PubMed:27114531, PubMed:27798099). Two stacked octamers can assemble to form a hexadecamer (PubMed:26812435, PubMed:27114531, PubMed:27798099).</text>
</comment>
<comment type="subcellular location">
    <subcellularLocation>
        <location evidence="9 15 16">Secreted</location>
    </subcellularLocation>
    <subcellularLocation>
        <location evidence="1">Cell membrane</location>
        <topology evidence="1">Peripheral membrane protein</topology>
        <orientation evidence="1">Extracellular side</orientation>
    </subcellularLocation>
    <text evidence="1">Binds to phosphatidylserine-containing lipid membranes and embeds itself partially into the lipid bilayer. Lipid-binding requires the presence of Ca(2+) ions.</text>
</comment>
<comment type="tissue specificity">
    <text evidence="9 19">Restricted to the retina (at protein level) (PubMed:10915776). Detected in the inner segment of the photoreceptors, the inner nuclear layer, the inner plexiform layer and the ganglion cell layer (at protein level). At the macula, expressed in both the outer and inner nuclear layers and in the inner plexiform layer (at protein level) (PubMed:10915776). Detected in retina (PubMed:9326935). Detected only within the photoreceptor cell layer, most prominently within the inner segments of the photoreceptors (PubMed:10915776). Undetectable in the inner plexiform layers and the inner nuclear layer (PubMed:10915776).</text>
</comment>
<comment type="developmental stage">
    <text evidence="9">Up-regulated during the differentiation of a retinoblastoma cell line.</text>
</comment>
<comment type="disease" evidence="4 5 6 7 8 11 12 13 14 15 18 19 20 21 22">
    <disease id="DI-02450">
        <name>Retinoschisis juvenile X-linked 1</name>
        <acronym>XLRS1</acronym>
        <description>A vitreo-retinal dystrophy characterized by macular pathology and by splitting of the superficial layer of the retina. Macular changes are present in almost all cases. In the fundi, radially oriented intraretinal foveomacular cysts are seen in a spoke-wheel configuration, with the absence of foveal reflex in most cases. In addition, approximately half of cases have bilateral peripheral retinoschisis in the inferotemporal part of the retina. Aside from the typical fundus appearance, strabismus, nystagmus, axial hyperopia, defective color vision and foveal ectopy can be present. The most important complications are vitreous hemorrhage, retinal detachment, and neovascular glaucoma.</description>
        <dbReference type="MIM" id="312700"/>
    </disease>
    <text>The disease is caused by variants affecting the gene represented in this entry.</text>
</comment>
<evidence type="ECO:0000250" key="1">
    <source>
        <dbReference type="UniProtKB" id="Q9Z1L4"/>
    </source>
</evidence>
<evidence type="ECO:0000255" key="2"/>
<evidence type="ECO:0000255" key="3">
    <source>
        <dbReference type="PROSITE-ProRule" id="PRU00081"/>
    </source>
</evidence>
<evidence type="ECO:0000269" key="4">
    <source>
    </source>
</evidence>
<evidence type="ECO:0000269" key="5">
    <source>
    </source>
</evidence>
<evidence type="ECO:0000269" key="6">
    <source>
    </source>
</evidence>
<evidence type="ECO:0000269" key="7">
    <source>
    </source>
</evidence>
<evidence type="ECO:0000269" key="8">
    <source>
    </source>
</evidence>
<evidence type="ECO:0000269" key="9">
    <source>
    </source>
</evidence>
<evidence type="ECO:0000269" key="10">
    <source>
    </source>
</evidence>
<evidence type="ECO:0000269" key="11">
    <source>
    </source>
</evidence>
<evidence type="ECO:0000269" key="12">
    <source>
    </source>
</evidence>
<evidence type="ECO:0000269" key="13">
    <source>
    </source>
</evidence>
<evidence type="ECO:0000269" key="14">
    <source>
    </source>
</evidence>
<evidence type="ECO:0000269" key="15">
    <source>
    </source>
</evidence>
<evidence type="ECO:0000269" key="16">
    <source>
    </source>
</evidence>
<evidence type="ECO:0000269" key="17">
    <source>
    </source>
</evidence>
<evidence type="ECO:0000269" key="18">
    <source>
    </source>
</evidence>
<evidence type="ECO:0000269" key="19">
    <source>
    </source>
</evidence>
<evidence type="ECO:0000269" key="20">
    <source>
    </source>
</evidence>
<evidence type="ECO:0000269" key="21">
    <source>
    </source>
</evidence>
<evidence type="ECO:0000269" key="22">
    <source ref="15"/>
</evidence>
<evidence type="ECO:0000305" key="23">
    <source>
    </source>
</evidence>
<evidence type="ECO:0007744" key="24">
    <source>
        <dbReference type="PDB" id="3JD6"/>
    </source>
</evidence>
<proteinExistence type="evidence at protein level"/>